<feature type="chain" id="PRO_0000289677" description="Mitogen-activated protein kinase HOG1">
    <location>
        <begin position="1"/>
        <end position="358"/>
    </location>
</feature>
<feature type="domain" description="Protein kinase" evidence="5">
    <location>
        <begin position="20"/>
        <end position="299"/>
    </location>
</feature>
<feature type="short sequence motif" description="TXY">
    <location>
        <begin position="171"/>
        <end position="173"/>
    </location>
</feature>
<feature type="active site" description="Proton acceptor" evidence="5 6">
    <location>
        <position position="141"/>
    </location>
</feature>
<feature type="binding site" evidence="5">
    <location>
        <begin position="26"/>
        <end position="34"/>
    </location>
    <ligand>
        <name>ATP</name>
        <dbReference type="ChEBI" id="CHEBI:30616"/>
    </ligand>
</feature>
<feature type="binding site" evidence="5">
    <location>
        <position position="49"/>
    </location>
    <ligand>
        <name>ATP</name>
        <dbReference type="ChEBI" id="CHEBI:30616"/>
    </ligand>
</feature>
<feature type="modified residue" description="Phosphothreonine" evidence="1">
    <location>
        <position position="171"/>
    </location>
</feature>
<feature type="modified residue" description="Phosphotyrosine" evidence="1">
    <location>
        <position position="173"/>
    </location>
</feature>
<sequence length="358" mass="40995">MAEFVRAQIFGTTFEITSRYSDLQPVGMGAFGLVCSARDQLTNQNVAVKKIMKPFSTPVLAKRTYRELKLLKHLRHENVISLSDIFISPLEDIYFVTELLGTDLHRLLTSRPLEKQFIQYFLYQIMRGLKYVHSAGVVHRDLKPSNILVNENCDLKICDFGLARIQDPQMTGYVSTRYYRAPEIMLTWQKYDVEVDIWSAGCIFAEMLDGKPLFPGKDHVNQFSIITELLGTPPDDVINTIASENTLRFVKSLPKRERQPLRNKFRNADDSAIDLMERMLVFDPKKRITAAEALSHDYLAPYHDPTDEPVAEEKFDWSFNDADLPVDTWKIMMYSEILDYHNVEAGASGLEDGSVPAQ</sequence>
<protein>
    <recommendedName>
        <fullName>Mitogen-activated protein kinase HOG1</fullName>
        <shortName>MAP kinase HOG1</shortName>
        <ecNumber evidence="2">2.7.11.24</ecNumber>
    </recommendedName>
    <alternativeName>
        <fullName>Bbhog1</fullName>
    </alternativeName>
</protein>
<organism>
    <name type="scientific">Beauveria bassiana</name>
    <name type="common">White muscardine disease fungus</name>
    <name type="synonym">Tritirachium shiotae</name>
    <dbReference type="NCBI Taxonomy" id="176275"/>
    <lineage>
        <taxon>Eukaryota</taxon>
        <taxon>Fungi</taxon>
        <taxon>Dikarya</taxon>
        <taxon>Ascomycota</taxon>
        <taxon>Pezizomycotina</taxon>
        <taxon>Sordariomycetes</taxon>
        <taxon>Hypocreomycetidae</taxon>
        <taxon>Hypocreales</taxon>
        <taxon>Cordycipitaceae</taxon>
        <taxon>Beauveria</taxon>
    </lineage>
</organism>
<name>HOG1_BEABA</name>
<reference key="1">
    <citation type="submission" date="2004-03" db="EMBL/GenBank/DDBJ databases">
        <title>A mitogen-activated protein kinase (Bbhog1) gene from Beauveria bassiana.</title>
        <authorList>
            <person name="Zhang Y.J."/>
            <person name="Fang W.G."/>
            <person name="Xiao Y.H."/>
            <person name="Jin K."/>
            <person name="Zhou Y.H."/>
            <person name="Luo Z.B."/>
            <person name="Pei Y."/>
        </authorList>
    </citation>
    <scope>NUCLEOTIDE SEQUENCE [GENOMIC DNA]</scope>
</reference>
<comment type="function">
    <text evidence="4">Proline-directed serine/threonine-protein kinase involved in a signal transduction pathway that is activated by changes in the osmolarity of the extracellular environment. Controls osmotic regulation of transcription of target genes.</text>
</comment>
<comment type="catalytic activity">
    <reaction evidence="2">
        <text>L-seryl-[protein] + ATP = O-phospho-L-seryl-[protein] + ADP + H(+)</text>
        <dbReference type="Rhea" id="RHEA:17989"/>
        <dbReference type="Rhea" id="RHEA-COMP:9863"/>
        <dbReference type="Rhea" id="RHEA-COMP:11604"/>
        <dbReference type="ChEBI" id="CHEBI:15378"/>
        <dbReference type="ChEBI" id="CHEBI:29999"/>
        <dbReference type="ChEBI" id="CHEBI:30616"/>
        <dbReference type="ChEBI" id="CHEBI:83421"/>
        <dbReference type="ChEBI" id="CHEBI:456216"/>
        <dbReference type="EC" id="2.7.11.24"/>
    </reaction>
    <physiologicalReaction direction="left-to-right" evidence="2">
        <dbReference type="Rhea" id="RHEA:17990"/>
    </physiologicalReaction>
</comment>
<comment type="catalytic activity">
    <reaction evidence="2">
        <text>L-threonyl-[protein] + ATP = O-phospho-L-threonyl-[protein] + ADP + H(+)</text>
        <dbReference type="Rhea" id="RHEA:46608"/>
        <dbReference type="Rhea" id="RHEA-COMP:11060"/>
        <dbReference type="Rhea" id="RHEA-COMP:11605"/>
        <dbReference type="ChEBI" id="CHEBI:15378"/>
        <dbReference type="ChEBI" id="CHEBI:30013"/>
        <dbReference type="ChEBI" id="CHEBI:30616"/>
        <dbReference type="ChEBI" id="CHEBI:61977"/>
        <dbReference type="ChEBI" id="CHEBI:456216"/>
        <dbReference type="EC" id="2.7.11.24"/>
    </reaction>
    <physiologicalReaction direction="left-to-right" evidence="2">
        <dbReference type="Rhea" id="RHEA:46609"/>
    </physiologicalReaction>
</comment>
<comment type="cofactor">
    <cofactor evidence="3">
        <name>Mg(2+)</name>
        <dbReference type="ChEBI" id="CHEBI:18420"/>
    </cofactor>
</comment>
<comment type="activity regulation">
    <text evidence="1">Activated by tyrosine and threonine phosphorylation.</text>
</comment>
<comment type="subcellular location">
    <subcellularLocation>
        <location evidence="1">Cytoplasm</location>
    </subcellularLocation>
    <subcellularLocation>
        <location evidence="1">Nucleus</location>
    </subcellularLocation>
</comment>
<comment type="domain">
    <text>The TXY motif contains the threonine and tyrosine residues whose phosphorylation activates the MAP kinases.</text>
</comment>
<comment type="PTM">
    <text evidence="1">Dually phosphorylated on Thr-171 and Tyr-173, which activates the enzyme.</text>
</comment>
<comment type="similarity">
    <text evidence="5">Belongs to the protein kinase superfamily. Ser/Thr protein kinase family. MAP kinase subfamily. HOG1 sub-subfamily.</text>
</comment>
<proteinExistence type="inferred from homology"/>
<keyword id="KW-0010">Activator</keyword>
<keyword id="KW-0067">ATP-binding</keyword>
<keyword id="KW-0963">Cytoplasm</keyword>
<keyword id="KW-0418">Kinase</keyword>
<keyword id="KW-0547">Nucleotide-binding</keyword>
<keyword id="KW-0539">Nucleus</keyword>
<keyword id="KW-0597">Phosphoprotein</keyword>
<keyword id="KW-0723">Serine/threonine-protein kinase</keyword>
<keyword id="KW-0804">Transcription</keyword>
<keyword id="KW-0805">Transcription regulation</keyword>
<keyword id="KW-0808">Transferase</keyword>
<gene>
    <name type="primary">HOG1</name>
</gene>
<accession>Q6PWX2</accession>
<evidence type="ECO:0000250" key="1"/>
<evidence type="ECO:0000250" key="2">
    <source>
        <dbReference type="UniProtKB" id="P32485"/>
    </source>
</evidence>
<evidence type="ECO:0000250" key="3">
    <source>
        <dbReference type="UniProtKB" id="Q16539"/>
    </source>
</evidence>
<evidence type="ECO:0000250" key="4">
    <source>
        <dbReference type="UniProtKB" id="Q4WSF6"/>
    </source>
</evidence>
<evidence type="ECO:0000255" key="5">
    <source>
        <dbReference type="PROSITE-ProRule" id="PRU00159"/>
    </source>
</evidence>
<evidence type="ECO:0000255" key="6">
    <source>
        <dbReference type="PROSITE-ProRule" id="PRU10027"/>
    </source>
</evidence>
<dbReference type="EC" id="2.7.11.24" evidence="2"/>
<dbReference type="EMBL" id="AY572854">
    <property type="protein sequence ID" value="AAS77871.1"/>
    <property type="molecule type" value="Genomic_DNA"/>
</dbReference>
<dbReference type="SMR" id="Q6PWX2"/>
<dbReference type="PHI-base" id="PHI:7280"/>
<dbReference type="GO" id="GO:0005737">
    <property type="term" value="C:cytoplasm"/>
    <property type="evidence" value="ECO:0007669"/>
    <property type="project" value="UniProtKB-SubCell"/>
</dbReference>
<dbReference type="GO" id="GO:0005634">
    <property type="term" value="C:nucleus"/>
    <property type="evidence" value="ECO:0007669"/>
    <property type="project" value="UniProtKB-SubCell"/>
</dbReference>
<dbReference type="GO" id="GO:0005524">
    <property type="term" value="F:ATP binding"/>
    <property type="evidence" value="ECO:0007669"/>
    <property type="project" value="UniProtKB-KW"/>
</dbReference>
<dbReference type="GO" id="GO:0004707">
    <property type="term" value="F:MAP kinase activity"/>
    <property type="evidence" value="ECO:0007669"/>
    <property type="project" value="UniProtKB-EC"/>
</dbReference>
<dbReference type="GO" id="GO:0106310">
    <property type="term" value="F:protein serine kinase activity"/>
    <property type="evidence" value="ECO:0007669"/>
    <property type="project" value="RHEA"/>
</dbReference>
<dbReference type="GO" id="GO:0051403">
    <property type="term" value="P:stress-activated MAPK cascade"/>
    <property type="evidence" value="ECO:0007669"/>
    <property type="project" value="InterPro"/>
</dbReference>
<dbReference type="CDD" id="cd07856">
    <property type="entry name" value="STKc_Sty1_Hog1"/>
    <property type="match status" value="1"/>
</dbReference>
<dbReference type="FunFam" id="1.10.510.10:FF:000049">
    <property type="entry name" value="Mitogen-activated protein kinase"/>
    <property type="match status" value="1"/>
</dbReference>
<dbReference type="FunFam" id="3.30.200.20:FF:000050">
    <property type="entry name" value="Mitogen-activated protein kinase"/>
    <property type="match status" value="1"/>
</dbReference>
<dbReference type="Gene3D" id="3.30.200.20">
    <property type="entry name" value="Phosphorylase Kinase, domain 1"/>
    <property type="match status" value="1"/>
</dbReference>
<dbReference type="Gene3D" id="1.10.510.10">
    <property type="entry name" value="Transferase(Phosphotransferase) domain 1"/>
    <property type="match status" value="1"/>
</dbReference>
<dbReference type="InterPro" id="IPR011009">
    <property type="entry name" value="Kinase-like_dom_sf"/>
</dbReference>
<dbReference type="InterPro" id="IPR050117">
    <property type="entry name" value="MAP_kinase"/>
</dbReference>
<dbReference type="InterPro" id="IPR003527">
    <property type="entry name" value="MAP_kinase_CS"/>
</dbReference>
<dbReference type="InterPro" id="IPR008352">
    <property type="entry name" value="MAPK_p38-like"/>
</dbReference>
<dbReference type="InterPro" id="IPR038783">
    <property type="entry name" value="MAPK_Sty1/Hog1"/>
</dbReference>
<dbReference type="InterPro" id="IPR000719">
    <property type="entry name" value="Prot_kinase_dom"/>
</dbReference>
<dbReference type="InterPro" id="IPR017441">
    <property type="entry name" value="Protein_kinase_ATP_BS"/>
</dbReference>
<dbReference type="InterPro" id="IPR008271">
    <property type="entry name" value="Ser/Thr_kinase_AS"/>
</dbReference>
<dbReference type="PANTHER" id="PTHR24055">
    <property type="entry name" value="MITOGEN-ACTIVATED PROTEIN KINASE"/>
    <property type="match status" value="1"/>
</dbReference>
<dbReference type="Pfam" id="PF00069">
    <property type="entry name" value="Pkinase"/>
    <property type="match status" value="1"/>
</dbReference>
<dbReference type="PRINTS" id="PR01773">
    <property type="entry name" value="P38MAPKINASE"/>
</dbReference>
<dbReference type="SMART" id="SM00220">
    <property type="entry name" value="S_TKc"/>
    <property type="match status" value="1"/>
</dbReference>
<dbReference type="SUPFAM" id="SSF56112">
    <property type="entry name" value="Protein kinase-like (PK-like)"/>
    <property type="match status" value="1"/>
</dbReference>
<dbReference type="PROSITE" id="PS01351">
    <property type="entry name" value="MAPK"/>
    <property type="match status" value="1"/>
</dbReference>
<dbReference type="PROSITE" id="PS00107">
    <property type="entry name" value="PROTEIN_KINASE_ATP"/>
    <property type="match status" value="1"/>
</dbReference>
<dbReference type="PROSITE" id="PS50011">
    <property type="entry name" value="PROTEIN_KINASE_DOM"/>
    <property type="match status" value="1"/>
</dbReference>
<dbReference type="PROSITE" id="PS00108">
    <property type="entry name" value="PROTEIN_KINASE_ST"/>
    <property type="match status" value="1"/>
</dbReference>